<reference key="1">
    <citation type="journal article" date="2008" name="J. Bacteriol.">
        <title>Comparative genome sequence analysis of multidrug-resistant Acinetobacter baumannii.</title>
        <authorList>
            <person name="Adams M.D."/>
            <person name="Goglin K."/>
            <person name="Molyneaux N."/>
            <person name="Hujer K.M."/>
            <person name="Lavender H."/>
            <person name="Jamison J.J."/>
            <person name="MacDonald I.J."/>
            <person name="Martin K.M."/>
            <person name="Russo T."/>
            <person name="Campagnari A.A."/>
            <person name="Hujer A.M."/>
            <person name="Bonomo R.A."/>
            <person name="Gill S.R."/>
        </authorList>
    </citation>
    <scope>NUCLEOTIDE SEQUENCE [LARGE SCALE GENOMIC DNA]</scope>
    <source>
        <strain>AB307-0294</strain>
    </source>
</reference>
<gene>
    <name evidence="1" type="primary">rpmC</name>
    <name type="ordered locus">ABBFA_000440</name>
</gene>
<proteinExistence type="inferred from homology"/>
<name>RL29_ACIB3</name>
<organism>
    <name type="scientific">Acinetobacter baumannii (strain AB307-0294)</name>
    <dbReference type="NCBI Taxonomy" id="557600"/>
    <lineage>
        <taxon>Bacteria</taxon>
        <taxon>Pseudomonadati</taxon>
        <taxon>Pseudomonadota</taxon>
        <taxon>Gammaproteobacteria</taxon>
        <taxon>Moraxellales</taxon>
        <taxon>Moraxellaceae</taxon>
        <taxon>Acinetobacter</taxon>
        <taxon>Acinetobacter calcoaceticus/baumannii complex</taxon>
    </lineage>
</organism>
<keyword id="KW-0687">Ribonucleoprotein</keyword>
<keyword id="KW-0689">Ribosomal protein</keyword>
<protein>
    <recommendedName>
        <fullName evidence="1">Large ribosomal subunit protein uL29</fullName>
    </recommendedName>
    <alternativeName>
        <fullName evidence="2">50S ribosomal protein L29</fullName>
    </alternativeName>
</protein>
<feature type="chain" id="PRO_1000121716" description="Large ribosomal subunit protein uL29">
    <location>
        <begin position="1"/>
        <end position="65"/>
    </location>
</feature>
<accession>B7GW10</accession>
<sequence>MKTKDLREKSVEELKALLDEQQLNQFRLRMAKATGQLGKSHEVQVARKTIARIKTLLTEKQGNGQ</sequence>
<comment type="similarity">
    <text evidence="1">Belongs to the universal ribosomal protein uL29 family.</text>
</comment>
<dbReference type="EMBL" id="CP001172">
    <property type="protein sequence ID" value="ACJ56181.1"/>
    <property type="molecule type" value="Genomic_DNA"/>
</dbReference>
<dbReference type="RefSeq" id="WP_000849928.1">
    <property type="nucleotide sequence ID" value="NZ_CP001172.1"/>
</dbReference>
<dbReference type="SMR" id="B7GW10"/>
<dbReference type="GeneID" id="9380824"/>
<dbReference type="HOGENOM" id="CLU_158491_1_2_6"/>
<dbReference type="Proteomes" id="UP000006924">
    <property type="component" value="Chromosome"/>
</dbReference>
<dbReference type="GO" id="GO:0022625">
    <property type="term" value="C:cytosolic large ribosomal subunit"/>
    <property type="evidence" value="ECO:0007669"/>
    <property type="project" value="TreeGrafter"/>
</dbReference>
<dbReference type="GO" id="GO:0003735">
    <property type="term" value="F:structural constituent of ribosome"/>
    <property type="evidence" value="ECO:0007669"/>
    <property type="project" value="InterPro"/>
</dbReference>
<dbReference type="GO" id="GO:0006412">
    <property type="term" value="P:translation"/>
    <property type="evidence" value="ECO:0007669"/>
    <property type="project" value="UniProtKB-UniRule"/>
</dbReference>
<dbReference type="CDD" id="cd00427">
    <property type="entry name" value="Ribosomal_L29_HIP"/>
    <property type="match status" value="1"/>
</dbReference>
<dbReference type="FunFam" id="1.10.287.310:FF:000001">
    <property type="entry name" value="50S ribosomal protein L29"/>
    <property type="match status" value="1"/>
</dbReference>
<dbReference type="Gene3D" id="1.10.287.310">
    <property type="match status" value="1"/>
</dbReference>
<dbReference type="HAMAP" id="MF_00374">
    <property type="entry name" value="Ribosomal_uL29"/>
    <property type="match status" value="1"/>
</dbReference>
<dbReference type="InterPro" id="IPR050063">
    <property type="entry name" value="Ribosomal_protein_uL29"/>
</dbReference>
<dbReference type="InterPro" id="IPR001854">
    <property type="entry name" value="Ribosomal_uL29"/>
</dbReference>
<dbReference type="InterPro" id="IPR036049">
    <property type="entry name" value="Ribosomal_uL29_sf"/>
</dbReference>
<dbReference type="NCBIfam" id="TIGR00012">
    <property type="entry name" value="L29"/>
    <property type="match status" value="1"/>
</dbReference>
<dbReference type="PANTHER" id="PTHR10916">
    <property type="entry name" value="60S RIBOSOMAL PROTEIN L35/50S RIBOSOMAL PROTEIN L29"/>
    <property type="match status" value="1"/>
</dbReference>
<dbReference type="PANTHER" id="PTHR10916:SF0">
    <property type="entry name" value="LARGE RIBOSOMAL SUBUNIT PROTEIN UL29C"/>
    <property type="match status" value="1"/>
</dbReference>
<dbReference type="Pfam" id="PF00831">
    <property type="entry name" value="Ribosomal_L29"/>
    <property type="match status" value="1"/>
</dbReference>
<dbReference type="SUPFAM" id="SSF46561">
    <property type="entry name" value="Ribosomal protein L29 (L29p)"/>
    <property type="match status" value="1"/>
</dbReference>
<evidence type="ECO:0000255" key="1">
    <source>
        <dbReference type="HAMAP-Rule" id="MF_00374"/>
    </source>
</evidence>
<evidence type="ECO:0000305" key="2"/>